<name>CYB_RHIMO</name>
<dbReference type="EMBL" id="AF406806">
    <property type="protein sequence ID" value="AAK97518.1"/>
    <property type="molecule type" value="Genomic_DNA"/>
</dbReference>
<dbReference type="RefSeq" id="NP_976099.1">
    <property type="nucleotide sequence ID" value="NC_005433.1"/>
</dbReference>
<dbReference type="SMR" id="Q94VK4"/>
<dbReference type="GeneID" id="2746478"/>
<dbReference type="CTD" id="4519"/>
<dbReference type="GO" id="GO:0005743">
    <property type="term" value="C:mitochondrial inner membrane"/>
    <property type="evidence" value="ECO:0007669"/>
    <property type="project" value="UniProtKB-SubCell"/>
</dbReference>
<dbReference type="GO" id="GO:0045275">
    <property type="term" value="C:respiratory chain complex III"/>
    <property type="evidence" value="ECO:0007669"/>
    <property type="project" value="InterPro"/>
</dbReference>
<dbReference type="GO" id="GO:0046872">
    <property type="term" value="F:metal ion binding"/>
    <property type="evidence" value="ECO:0007669"/>
    <property type="project" value="UniProtKB-KW"/>
</dbReference>
<dbReference type="GO" id="GO:0008121">
    <property type="term" value="F:ubiquinol-cytochrome-c reductase activity"/>
    <property type="evidence" value="ECO:0007669"/>
    <property type="project" value="InterPro"/>
</dbReference>
<dbReference type="GO" id="GO:0006122">
    <property type="term" value="P:mitochondrial electron transport, ubiquinol to cytochrome c"/>
    <property type="evidence" value="ECO:0007669"/>
    <property type="project" value="TreeGrafter"/>
</dbReference>
<dbReference type="CDD" id="cd00290">
    <property type="entry name" value="cytochrome_b_C"/>
    <property type="match status" value="1"/>
</dbReference>
<dbReference type="CDD" id="cd00284">
    <property type="entry name" value="Cytochrome_b_N"/>
    <property type="match status" value="1"/>
</dbReference>
<dbReference type="FunFam" id="1.20.810.10:FF:000002">
    <property type="entry name" value="Cytochrome b"/>
    <property type="match status" value="1"/>
</dbReference>
<dbReference type="Gene3D" id="1.20.810.10">
    <property type="entry name" value="Cytochrome Bc1 Complex, Chain C"/>
    <property type="match status" value="1"/>
</dbReference>
<dbReference type="InterPro" id="IPR005798">
    <property type="entry name" value="Cyt_b/b6_C"/>
</dbReference>
<dbReference type="InterPro" id="IPR036150">
    <property type="entry name" value="Cyt_b/b6_C_sf"/>
</dbReference>
<dbReference type="InterPro" id="IPR005797">
    <property type="entry name" value="Cyt_b/b6_N"/>
</dbReference>
<dbReference type="InterPro" id="IPR027387">
    <property type="entry name" value="Cytb/b6-like_sf"/>
</dbReference>
<dbReference type="InterPro" id="IPR030689">
    <property type="entry name" value="Cytochrome_b"/>
</dbReference>
<dbReference type="InterPro" id="IPR048260">
    <property type="entry name" value="Cytochrome_b_C_euk/bac"/>
</dbReference>
<dbReference type="InterPro" id="IPR048259">
    <property type="entry name" value="Cytochrome_b_N_euk/bac"/>
</dbReference>
<dbReference type="InterPro" id="IPR016174">
    <property type="entry name" value="Di-haem_cyt_TM"/>
</dbReference>
<dbReference type="PANTHER" id="PTHR19271">
    <property type="entry name" value="CYTOCHROME B"/>
    <property type="match status" value="1"/>
</dbReference>
<dbReference type="PANTHER" id="PTHR19271:SF16">
    <property type="entry name" value="CYTOCHROME B"/>
    <property type="match status" value="1"/>
</dbReference>
<dbReference type="Pfam" id="PF00032">
    <property type="entry name" value="Cytochrom_B_C"/>
    <property type="match status" value="1"/>
</dbReference>
<dbReference type="Pfam" id="PF00033">
    <property type="entry name" value="Cytochrome_B"/>
    <property type="match status" value="1"/>
</dbReference>
<dbReference type="PIRSF" id="PIRSF038885">
    <property type="entry name" value="COB"/>
    <property type="match status" value="1"/>
</dbReference>
<dbReference type="SUPFAM" id="SSF81648">
    <property type="entry name" value="a domain/subunit of cytochrome bc1 complex (Ubiquinol-cytochrome c reductase)"/>
    <property type="match status" value="1"/>
</dbReference>
<dbReference type="SUPFAM" id="SSF81342">
    <property type="entry name" value="Transmembrane di-heme cytochromes"/>
    <property type="match status" value="1"/>
</dbReference>
<dbReference type="PROSITE" id="PS51003">
    <property type="entry name" value="CYTB_CTER"/>
    <property type="match status" value="1"/>
</dbReference>
<dbReference type="PROSITE" id="PS51002">
    <property type="entry name" value="CYTB_NTER"/>
    <property type="match status" value="1"/>
</dbReference>
<comment type="function">
    <text evidence="2">Component of the ubiquinol-cytochrome c reductase complex (complex III or cytochrome b-c1 complex) that is part of the mitochondrial respiratory chain. The b-c1 complex mediates electron transfer from ubiquinol to cytochrome c. Contributes to the generation of a proton gradient across the mitochondrial membrane that is then used for ATP synthesis.</text>
</comment>
<comment type="cofactor">
    <cofactor evidence="2">
        <name>heme b</name>
        <dbReference type="ChEBI" id="CHEBI:60344"/>
    </cofactor>
    <text evidence="2">Binds 2 heme b groups non-covalently.</text>
</comment>
<comment type="subunit">
    <text evidence="2">The cytochrome bc1 complex contains 11 subunits: 3 respiratory subunits (MT-CYB, CYC1 and UQCRFS1), 2 core proteins (UQCRC1 and UQCRC2) and 6 low-molecular weight proteins (UQCRH/QCR6, UQCRB/QCR7, UQCRQ/QCR8, UQCR10/QCR9, UQCR11/QCR10 and a cleavage product of UQCRFS1). This cytochrome bc1 complex then forms a dimer.</text>
</comment>
<comment type="subcellular location">
    <subcellularLocation>
        <location evidence="2">Mitochondrion inner membrane</location>
        <topology evidence="2">Multi-pass membrane protein</topology>
    </subcellularLocation>
</comment>
<comment type="miscellaneous">
    <text evidence="1">Heme 1 (or BL or b562) is low-potential and absorbs at about 562 nm, and heme 2 (or BH or b566) is high-potential and absorbs at about 566 nm.</text>
</comment>
<comment type="similarity">
    <text evidence="3 4">Belongs to the cytochrome b family.</text>
</comment>
<comment type="caution">
    <text evidence="2">The full-length protein contains only eight transmembrane helices, not nine as predicted by bioinformatics tools.</text>
</comment>
<proteinExistence type="inferred from homology"/>
<accession>Q94VK4</accession>
<evidence type="ECO:0000250" key="1"/>
<evidence type="ECO:0000250" key="2">
    <source>
        <dbReference type="UniProtKB" id="P00157"/>
    </source>
</evidence>
<evidence type="ECO:0000255" key="3">
    <source>
        <dbReference type="PROSITE-ProRule" id="PRU00967"/>
    </source>
</evidence>
<evidence type="ECO:0000255" key="4">
    <source>
        <dbReference type="PROSITE-ProRule" id="PRU00968"/>
    </source>
</evidence>
<reference key="1">
    <citation type="journal article" date="2002" name="Mol. Biol. Evol.">
        <title>Four new mitochondrial genomes and the increased stability of evolutionary trees of mammals from improved taxon sampling.</title>
        <authorList>
            <person name="Lin Y.-H."/>
            <person name="McLenachan P.A."/>
            <person name="Gore A.R."/>
            <person name="Phillips M.J."/>
            <person name="Ota R."/>
            <person name="Hendy M.D."/>
            <person name="Penny D."/>
        </authorList>
    </citation>
    <scope>NUCLEOTIDE SEQUENCE [GENOMIC DNA]</scope>
</reference>
<protein>
    <recommendedName>
        <fullName>Cytochrome b</fullName>
    </recommendedName>
    <alternativeName>
        <fullName>Complex III subunit 3</fullName>
    </alternativeName>
    <alternativeName>
        <fullName>Complex III subunit III</fullName>
    </alternativeName>
    <alternativeName>
        <fullName>Cytochrome b-c1 complex subunit 3</fullName>
    </alternativeName>
    <alternativeName>
        <fullName>Ubiquinol-cytochrome-c reductase complex cytochrome b subunit</fullName>
    </alternativeName>
</protein>
<sequence>MTNIRKSHPLFKIINDSFIDLPAPSSISSWWNFGSLLGVCLAVQILTGLFLAMHYTPDTATAFYSVTHICRDVNYGWVLRYLHANGASMFFICLFLHVGRGIYYGSYTFSETWNIGIILLFAVMATAFMGYVLPWGQMSFWGATVITNLLSAIPYVGTTLVEWVWGGFSVDKATLTRFFALHFLLPFIISAMVMVHLLFLHETGSNNPTGIPSDVDMIPFHPYYTIKDILGLVLMLMALLSLVLFAPDLLGDPDNYTPANPLNTPPHIKPEWYFLFAYAILRSIPNKLGGVVALVLSILVLAVIPLLHTSKQRSMTFRPLSQCLFWLLVADLLTLTWIGGQPVEHPFIIIGQLASILYFLIILVLMPLASIAENHLLKW</sequence>
<gene>
    <name type="primary">MT-CYB</name>
    <name type="synonym">COB</name>
    <name type="synonym">CYTB</name>
    <name type="synonym">MTCYB</name>
</gene>
<keyword id="KW-0249">Electron transport</keyword>
<keyword id="KW-0349">Heme</keyword>
<keyword id="KW-0408">Iron</keyword>
<keyword id="KW-0472">Membrane</keyword>
<keyword id="KW-0479">Metal-binding</keyword>
<keyword id="KW-0496">Mitochondrion</keyword>
<keyword id="KW-0999">Mitochondrion inner membrane</keyword>
<keyword id="KW-0679">Respiratory chain</keyword>
<keyword id="KW-0812">Transmembrane</keyword>
<keyword id="KW-1133">Transmembrane helix</keyword>
<keyword id="KW-0813">Transport</keyword>
<keyword id="KW-0830">Ubiquinone</keyword>
<feature type="chain" id="PRO_0000061499" description="Cytochrome b">
    <location>
        <begin position="1"/>
        <end position="379"/>
    </location>
</feature>
<feature type="transmembrane region" description="Helical" evidence="2">
    <location>
        <begin position="33"/>
        <end position="53"/>
    </location>
</feature>
<feature type="transmembrane region" description="Helical" evidence="2">
    <location>
        <begin position="77"/>
        <end position="98"/>
    </location>
</feature>
<feature type="transmembrane region" description="Helical" evidence="2">
    <location>
        <begin position="113"/>
        <end position="133"/>
    </location>
</feature>
<feature type="transmembrane region" description="Helical" evidence="2">
    <location>
        <begin position="178"/>
        <end position="198"/>
    </location>
</feature>
<feature type="transmembrane region" description="Helical" evidence="2">
    <location>
        <begin position="226"/>
        <end position="246"/>
    </location>
</feature>
<feature type="transmembrane region" description="Helical" evidence="2">
    <location>
        <begin position="288"/>
        <end position="308"/>
    </location>
</feature>
<feature type="transmembrane region" description="Helical" evidence="2">
    <location>
        <begin position="320"/>
        <end position="340"/>
    </location>
</feature>
<feature type="transmembrane region" description="Helical" evidence="2">
    <location>
        <begin position="347"/>
        <end position="367"/>
    </location>
</feature>
<feature type="binding site" description="axial binding residue" evidence="2">
    <location>
        <position position="83"/>
    </location>
    <ligand>
        <name>heme b</name>
        <dbReference type="ChEBI" id="CHEBI:60344"/>
        <label>b562</label>
    </ligand>
    <ligandPart>
        <name>Fe</name>
        <dbReference type="ChEBI" id="CHEBI:18248"/>
    </ligandPart>
</feature>
<feature type="binding site" description="axial binding residue" evidence="2">
    <location>
        <position position="97"/>
    </location>
    <ligand>
        <name>heme b</name>
        <dbReference type="ChEBI" id="CHEBI:60344"/>
        <label>b566</label>
    </ligand>
    <ligandPart>
        <name>Fe</name>
        <dbReference type="ChEBI" id="CHEBI:18248"/>
    </ligandPart>
</feature>
<feature type="binding site" description="axial binding residue" evidence="2">
    <location>
        <position position="182"/>
    </location>
    <ligand>
        <name>heme b</name>
        <dbReference type="ChEBI" id="CHEBI:60344"/>
        <label>b562</label>
    </ligand>
    <ligandPart>
        <name>Fe</name>
        <dbReference type="ChEBI" id="CHEBI:18248"/>
    </ligandPart>
</feature>
<feature type="binding site" description="axial binding residue" evidence="2">
    <location>
        <position position="196"/>
    </location>
    <ligand>
        <name>heme b</name>
        <dbReference type="ChEBI" id="CHEBI:60344"/>
        <label>b566</label>
    </ligand>
    <ligandPart>
        <name>Fe</name>
        <dbReference type="ChEBI" id="CHEBI:18248"/>
    </ligandPart>
</feature>
<feature type="binding site" evidence="2">
    <location>
        <position position="201"/>
    </location>
    <ligand>
        <name>a ubiquinone</name>
        <dbReference type="ChEBI" id="CHEBI:16389"/>
    </ligand>
</feature>
<organism>
    <name type="scientific">Rhinolophus monoceros</name>
    <name type="common">Formosan lesser horseshoe bat</name>
    <dbReference type="NCBI Taxonomy" id="169756"/>
    <lineage>
        <taxon>Eukaryota</taxon>
        <taxon>Metazoa</taxon>
        <taxon>Chordata</taxon>
        <taxon>Craniata</taxon>
        <taxon>Vertebrata</taxon>
        <taxon>Euteleostomi</taxon>
        <taxon>Mammalia</taxon>
        <taxon>Eutheria</taxon>
        <taxon>Laurasiatheria</taxon>
        <taxon>Chiroptera</taxon>
        <taxon>Yinpterochiroptera</taxon>
        <taxon>Rhinolophoidea</taxon>
        <taxon>Rhinolophidae</taxon>
        <taxon>Rhinolophinae</taxon>
        <taxon>Rhinolophus</taxon>
    </lineage>
</organism>
<geneLocation type="mitochondrion"/>